<reference key="1">
    <citation type="submission" date="2008-01" db="EMBL/GenBank/DDBJ databases">
        <title>Complete sequence of Pseudomonas putida GB-1.</title>
        <authorList>
            <consortium name="US DOE Joint Genome Institute"/>
            <person name="Copeland A."/>
            <person name="Lucas S."/>
            <person name="Lapidus A."/>
            <person name="Barry K."/>
            <person name="Glavina del Rio T."/>
            <person name="Dalin E."/>
            <person name="Tice H."/>
            <person name="Pitluck S."/>
            <person name="Bruce D."/>
            <person name="Goodwin L."/>
            <person name="Chertkov O."/>
            <person name="Brettin T."/>
            <person name="Detter J.C."/>
            <person name="Han C."/>
            <person name="Kuske C.R."/>
            <person name="Schmutz J."/>
            <person name="Larimer F."/>
            <person name="Land M."/>
            <person name="Hauser L."/>
            <person name="Kyrpides N."/>
            <person name="Kim E."/>
            <person name="McCarthy J.K."/>
            <person name="Richardson P."/>
        </authorList>
    </citation>
    <scope>NUCLEOTIDE SEQUENCE [LARGE SCALE GENOMIC DNA]</scope>
    <source>
        <strain>GB-1</strain>
    </source>
</reference>
<feature type="chain" id="PRO_1000082498" description="Ethanolamine ammonia-lyase small subunit">
    <location>
        <begin position="1"/>
        <end position="272"/>
    </location>
</feature>
<feature type="binding site" evidence="1">
    <location>
        <position position="161"/>
    </location>
    <ligand>
        <name>adenosylcob(III)alamin</name>
        <dbReference type="ChEBI" id="CHEBI:18408"/>
    </ligand>
</feature>
<feature type="binding site" evidence="1">
    <location>
        <position position="182"/>
    </location>
    <ligand>
        <name>adenosylcob(III)alamin</name>
        <dbReference type="ChEBI" id="CHEBI:18408"/>
    </ligand>
</feature>
<feature type="binding site" evidence="1">
    <location>
        <position position="211"/>
    </location>
    <ligand>
        <name>adenosylcob(III)alamin</name>
        <dbReference type="ChEBI" id="CHEBI:18408"/>
    </ligand>
</feature>
<gene>
    <name evidence="1" type="primary">eutC</name>
    <name type="ordered locus">PputGB1_0587</name>
</gene>
<organism>
    <name type="scientific">Pseudomonas putida (strain GB-1)</name>
    <dbReference type="NCBI Taxonomy" id="76869"/>
    <lineage>
        <taxon>Bacteria</taxon>
        <taxon>Pseudomonadati</taxon>
        <taxon>Pseudomonadota</taxon>
        <taxon>Gammaproteobacteria</taxon>
        <taxon>Pseudomonadales</taxon>
        <taxon>Pseudomonadaceae</taxon>
        <taxon>Pseudomonas</taxon>
    </lineage>
</organism>
<comment type="function">
    <text evidence="1">Catalyzes the deamination of various vicinal amino-alcohols to oxo compounds. Allows this organism to utilize ethanolamine as the sole source of nitrogen and carbon in the presence of external vitamin B12.</text>
</comment>
<comment type="catalytic activity">
    <reaction evidence="1">
        <text>ethanolamine = acetaldehyde + NH4(+)</text>
        <dbReference type="Rhea" id="RHEA:15313"/>
        <dbReference type="ChEBI" id="CHEBI:15343"/>
        <dbReference type="ChEBI" id="CHEBI:28938"/>
        <dbReference type="ChEBI" id="CHEBI:57603"/>
        <dbReference type="EC" id="4.3.1.7"/>
    </reaction>
</comment>
<comment type="cofactor">
    <cofactor evidence="1">
        <name>adenosylcob(III)alamin</name>
        <dbReference type="ChEBI" id="CHEBI:18408"/>
    </cofactor>
    <text evidence="1">Binds between the large and small subunits.</text>
</comment>
<comment type="pathway">
    <text evidence="1">Amine and polyamine degradation; ethanolamine degradation.</text>
</comment>
<comment type="subunit">
    <text evidence="1">The basic unit is a heterodimer which dimerizes to form tetramers. The heterotetramers trimerize; 6 large subunits form a core ring with 6 small subunits projecting outwards.</text>
</comment>
<comment type="subcellular location">
    <subcellularLocation>
        <location evidence="1">Bacterial microcompartment</location>
    </subcellularLocation>
</comment>
<comment type="similarity">
    <text evidence="1">Belongs to the EutC family.</text>
</comment>
<dbReference type="EC" id="4.3.1.7" evidence="1"/>
<dbReference type="EMBL" id="CP000926">
    <property type="protein sequence ID" value="ABY96498.1"/>
    <property type="molecule type" value="Genomic_DNA"/>
</dbReference>
<dbReference type="RefSeq" id="WP_012270309.1">
    <property type="nucleotide sequence ID" value="NC_010322.1"/>
</dbReference>
<dbReference type="SMR" id="B0KL94"/>
<dbReference type="KEGG" id="ppg:PputGB1_0587"/>
<dbReference type="eggNOG" id="COG4302">
    <property type="taxonomic scope" value="Bacteria"/>
</dbReference>
<dbReference type="HOGENOM" id="CLU_068224_1_0_6"/>
<dbReference type="UniPathway" id="UPA00560"/>
<dbReference type="Proteomes" id="UP000002157">
    <property type="component" value="Chromosome"/>
</dbReference>
<dbReference type="GO" id="GO:0009350">
    <property type="term" value="C:ethanolamine ammonia-lyase complex"/>
    <property type="evidence" value="ECO:0007669"/>
    <property type="project" value="UniProtKB-UniRule"/>
</dbReference>
<dbReference type="GO" id="GO:0031471">
    <property type="term" value="C:ethanolamine degradation polyhedral organelle"/>
    <property type="evidence" value="ECO:0007669"/>
    <property type="project" value="UniProtKB-UniRule"/>
</dbReference>
<dbReference type="GO" id="GO:0031419">
    <property type="term" value="F:cobalamin binding"/>
    <property type="evidence" value="ECO:0007669"/>
    <property type="project" value="UniProtKB-UniRule"/>
</dbReference>
<dbReference type="GO" id="GO:0008851">
    <property type="term" value="F:ethanolamine ammonia-lyase activity"/>
    <property type="evidence" value="ECO:0007669"/>
    <property type="project" value="UniProtKB-UniRule"/>
</dbReference>
<dbReference type="GO" id="GO:0006520">
    <property type="term" value="P:amino acid metabolic process"/>
    <property type="evidence" value="ECO:0007669"/>
    <property type="project" value="InterPro"/>
</dbReference>
<dbReference type="GO" id="GO:0046336">
    <property type="term" value="P:ethanolamine catabolic process"/>
    <property type="evidence" value="ECO:0007669"/>
    <property type="project" value="UniProtKB-UniRule"/>
</dbReference>
<dbReference type="FunFam" id="1.10.30.40:FF:000001">
    <property type="entry name" value="Ethanolamine ammonia-lyase light chain"/>
    <property type="match status" value="1"/>
</dbReference>
<dbReference type="FunFam" id="3.40.50.11240:FF:000001">
    <property type="entry name" value="Ethanolamine ammonia-lyase light chain"/>
    <property type="match status" value="1"/>
</dbReference>
<dbReference type="Gene3D" id="3.40.50.11240">
    <property type="entry name" value="Ethanolamine ammonia-lyase light chain (EutC)"/>
    <property type="match status" value="1"/>
</dbReference>
<dbReference type="Gene3D" id="1.10.30.40">
    <property type="entry name" value="Ethanolamine ammonia-lyase light chain (EutC), N-terminal domain"/>
    <property type="match status" value="1"/>
</dbReference>
<dbReference type="HAMAP" id="MF_00601">
    <property type="entry name" value="EutC"/>
    <property type="match status" value="1"/>
</dbReference>
<dbReference type="InterPro" id="IPR009246">
    <property type="entry name" value="EutC"/>
</dbReference>
<dbReference type="InterPro" id="IPR042251">
    <property type="entry name" value="EutC_C"/>
</dbReference>
<dbReference type="InterPro" id="IPR042255">
    <property type="entry name" value="EutC_N"/>
</dbReference>
<dbReference type="NCBIfam" id="NF003971">
    <property type="entry name" value="PRK05465.1"/>
    <property type="match status" value="1"/>
</dbReference>
<dbReference type="PANTHER" id="PTHR39330">
    <property type="entry name" value="ETHANOLAMINE AMMONIA-LYASE LIGHT CHAIN"/>
    <property type="match status" value="1"/>
</dbReference>
<dbReference type="PANTHER" id="PTHR39330:SF1">
    <property type="entry name" value="ETHANOLAMINE AMMONIA-LYASE SMALL SUBUNIT"/>
    <property type="match status" value="1"/>
</dbReference>
<dbReference type="Pfam" id="PF05985">
    <property type="entry name" value="EutC"/>
    <property type="match status" value="1"/>
</dbReference>
<dbReference type="PIRSF" id="PIRSF018982">
    <property type="entry name" value="EutC"/>
    <property type="match status" value="1"/>
</dbReference>
<proteinExistence type="inferred from homology"/>
<protein>
    <recommendedName>
        <fullName evidence="1">Ethanolamine ammonia-lyase small subunit</fullName>
        <shortName evidence="1">EAL small subunit</shortName>
        <ecNumber evidence="1">4.3.1.7</ecNumber>
    </recommendedName>
</protein>
<sequence length="272" mass="29488">MDHRTPTPDNPWLALRNLTPARIALGRTGTSLPTGAQLDFQFAHAQARDAVHLAFDHAGLASQLSDRGRDSLVLHSAASDRHQYLQRPDLGRRLNEDSIATLRQHTQANPGGVDLAIVVADGLSALAVHRHTLPFLNRFEEQAAADGWTSAPVVLVQQGRVAVADEVGELLGARMTVMLIGERPGLSSPDSLGLYFTYAPKVGLTDAYRNCISNIRLEGLSYGMAAHRLLYLMREACRRQLSGVNLKDEAEVHSLESEGSASQKGNFLLGKG</sequence>
<keyword id="KW-1283">Bacterial microcompartment</keyword>
<keyword id="KW-0846">Cobalamin</keyword>
<keyword id="KW-0170">Cobalt</keyword>
<keyword id="KW-0456">Lyase</keyword>
<name>EUTC_PSEPG</name>
<accession>B0KL94</accession>
<evidence type="ECO:0000255" key="1">
    <source>
        <dbReference type="HAMAP-Rule" id="MF_00601"/>
    </source>
</evidence>